<dbReference type="EC" id="3.2.2.27" evidence="1"/>
<dbReference type="EMBL" id="CP001129">
    <property type="protein sequence ID" value="ACG62501.1"/>
    <property type="molecule type" value="Genomic_DNA"/>
</dbReference>
<dbReference type="RefSeq" id="WP_012515766.1">
    <property type="nucleotide sequence ID" value="NC_011134.1"/>
</dbReference>
<dbReference type="SMR" id="B4U3D4"/>
<dbReference type="KEGG" id="sez:Sez_1152"/>
<dbReference type="HOGENOM" id="CLU_032162_3_1_9"/>
<dbReference type="Proteomes" id="UP000001873">
    <property type="component" value="Chromosome"/>
</dbReference>
<dbReference type="GO" id="GO:0005737">
    <property type="term" value="C:cytoplasm"/>
    <property type="evidence" value="ECO:0007669"/>
    <property type="project" value="UniProtKB-SubCell"/>
</dbReference>
<dbReference type="GO" id="GO:0004844">
    <property type="term" value="F:uracil DNA N-glycosylase activity"/>
    <property type="evidence" value="ECO:0007669"/>
    <property type="project" value="UniProtKB-UniRule"/>
</dbReference>
<dbReference type="GO" id="GO:0097510">
    <property type="term" value="P:base-excision repair, AP site formation via deaminated base removal"/>
    <property type="evidence" value="ECO:0007669"/>
    <property type="project" value="TreeGrafter"/>
</dbReference>
<dbReference type="CDD" id="cd10027">
    <property type="entry name" value="UDG-F1-like"/>
    <property type="match status" value="1"/>
</dbReference>
<dbReference type="FunFam" id="3.40.470.10:FF:000008">
    <property type="entry name" value="Uracil-DNA glycosylase"/>
    <property type="match status" value="1"/>
</dbReference>
<dbReference type="Gene3D" id="3.40.470.10">
    <property type="entry name" value="Uracil-DNA glycosylase-like domain"/>
    <property type="match status" value="1"/>
</dbReference>
<dbReference type="HAMAP" id="MF_00148">
    <property type="entry name" value="UDG"/>
    <property type="match status" value="1"/>
</dbReference>
<dbReference type="InterPro" id="IPR002043">
    <property type="entry name" value="UDG_fam1"/>
</dbReference>
<dbReference type="InterPro" id="IPR018085">
    <property type="entry name" value="Ura-DNA_Glyclase_AS"/>
</dbReference>
<dbReference type="InterPro" id="IPR005122">
    <property type="entry name" value="Uracil-DNA_glycosylase-like"/>
</dbReference>
<dbReference type="InterPro" id="IPR036895">
    <property type="entry name" value="Uracil-DNA_glycosylase-like_sf"/>
</dbReference>
<dbReference type="NCBIfam" id="NF003588">
    <property type="entry name" value="PRK05254.1-1"/>
    <property type="match status" value="1"/>
</dbReference>
<dbReference type="NCBIfam" id="NF003589">
    <property type="entry name" value="PRK05254.1-2"/>
    <property type="match status" value="1"/>
</dbReference>
<dbReference type="NCBIfam" id="NF003591">
    <property type="entry name" value="PRK05254.1-4"/>
    <property type="match status" value="1"/>
</dbReference>
<dbReference type="NCBIfam" id="NF003592">
    <property type="entry name" value="PRK05254.1-5"/>
    <property type="match status" value="1"/>
</dbReference>
<dbReference type="NCBIfam" id="TIGR00628">
    <property type="entry name" value="ung"/>
    <property type="match status" value="1"/>
</dbReference>
<dbReference type="PANTHER" id="PTHR11264">
    <property type="entry name" value="URACIL-DNA GLYCOSYLASE"/>
    <property type="match status" value="1"/>
</dbReference>
<dbReference type="PANTHER" id="PTHR11264:SF0">
    <property type="entry name" value="URACIL-DNA GLYCOSYLASE"/>
    <property type="match status" value="1"/>
</dbReference>
<dbReference type="Pfam" id="PF03167">
    <property type="entry name" value="UDG"/>
    <property type="match status" value="1"/>
</dbReference>
<dbReference type="SMART" id="SM00986">
    <property type="entry name" value="UDG"/>
    <property type="match status" value="1"/>
</dbReference>
<dbReference type="SMART" id="SM00987">
    <property type="entry name" value="UreE_C"/>
    <property type="match status" value="1"/>
</dbReference>
<dbReference type="SUPFAM" id="SSF52141">
    <property type="entry name" value="Uracil-DNA glycosylase-like"/>
    <property type="match status" value="1"/>
</dbReference>
<dbReference type="PROSITE" id="PS00130">
    <property type="entry name" value="U_DNA_GLYCOSYLASE"/>
    <property type="match status" value="1"/>
</dbReference>
<sequence length="217" mass="24297">MTHSAWHDEIKQVLPKDYYRRINRFLDEVYATGVVYPPRDNVFKALQVTPLEETRVLILGQDPYHGPLQAQGLSFSVPDSIPAPPSLQNILEELAADIGVRNHHDLSSWAEQGVLLLNACLTVPEGRANGHAGLIWEPFTDAVIKVLNAKDRPVVFILWGAYARRKKALITNPIHHVIESPHPSPLSAYRGFFGSKPFSRANAILEKEGLGQIDWLK</sequence>
<gene>
    <name evidence="1" type="primary">ung</name>
    <name type="ordered locus">Sez_1152</name>
</gene>
<accession>B4U3D4</accession>
<name>UNG_STREM</name>
<reference key="1">
    <citation type="journal article" date="2008" name="PLoS ONE">
        <title>Genome sequence of a lancefield group C Streptococcus zooepidemicus strain causing epidemic nephritis: new information about an old disease.</title>
        <authorList>
            <person name="Beres S.B."/>
            <person name="Sesso R."/>
            <person name="Pinto S.W.L."/>
            <person name="Hoe N.P."/>
            <person name="Porcella S.F."/>
            <person name="Deleo F.R."/>
            <person name="Musser J.M."/>
        </authorList>
    </citation>
    <scope>NUCLEOTIDE SEQUENCE [LARGE SCALE GENOMIC DNA]</scope>
    <source>
        <strain>MGCS10565</strain>
    </source>
</reference>
<feature type="chain" id="PRO_1000096610" description="Uracil-DNA glycosylase">
    <location>
        <begin position="1"/>
        <end position="217"/>
    </location>
</feature>
<feature type="active site" description="Proton acceptor" evidence="1">
    <location>
        <position position="62"/>
    </location>
</feature>
<keyword id="KW-0963">Cytoplasm</keyword>
<keyword id="KW-0227">DNA damage</keyword>
<keyword id="KW-0234">DNA repair</keyword>
<keyword id="KW-0378">Hydrolase</keyword>
<comment type="function">
    <text evidence="1">Excises uracil residues from the DNA which can arise as a result of misincorporation of dUMP residues by DNA polymerase or due to deamination of cytosine.</text>
</comment>
<comment type="catalytic activity">
    <reaction evidence="1">
        <text>Hydrolyzes single-stranded DNA or mismatched double-stranded DNA and polynucleotides, releasing free uracil.</text>
        <dbReference type="EC" id="3.2.2.27"/>
    </reaction>
</comment>
<comment type="subcellular location">
    <subcellularLocation>
        <location evidence="1">Cytoplasm</location>
    </subcellularLocation>
</comment>
<comment type="similarity">
    <text evidence="1">Belongs to the uracil-DNA glycosylase (UDG) superfamily. UNG family.</text>
</comment>
<organism>
    <name type="scientific">Streptococcus equi subsp. zooepidemicus (strain MGCS10565)</name>
    <dbReference type="NCBI Taxonomy" id="552526"/>
    <lineage>
        <taxon>Bacteria</taxon>
        <taxon>Bacillati</taxon>
        <taxon>Bacillota</taxon>
        <taxon>Bacilli</taxon>
        <taxon>Lactobacillales</taxon>
        <taxon>Streptococcaceae</taxon>
        <taxon>Streptococcus</taxon>
    </lineage>
</organism>
<protein>
    <recommendedName>
        <fullName evidence="1">Uracil-DNA glycosylase</fullName>
        <shortName evidence="1">UDG</shortName>
        <ecNumber evidence="1">3.2.2.27</ecNumber>
    </recommendedName>
</protein>
<evidence type="ECO:0000255" key="1">
    <source>
        <dbReference type="HAMAP-Rule" id="MF_00148"/>
    </source>
</evidence>
<proteinExistence type="inferred from homology"/>